<organism>
    <name type="scientific">Mycobacterium paratuberculosis</name>
    <dbReference type="NCBI Taxonomy" id="1770"/>
    <lineage>
        <taxon>Bacteria</taxon>
        <taxon>Bacillati</taxon>
        <taxon>Actinomycetota</taxon>
        <taxon>Actinomycetes</taxon>
        <taxon>Mycobacteriales</taxon>
        <taxon>Mycobacteriaceae</taxon>
        <taxon>Mycobacterium</taxon>
        <taxon>Mycobacterium avium complex (MAC)</taxon>
    </lineage>
</organism>
<evidence type="ECO:0000305" key="1"/>
<feature type="chain" id="PRO_0000075506" description="Insertion element IS900 uncharacterized 42 kDa protein">
    <location>
        <begin position="1"/>
        <end position="399"/>
    </location>
</feature>
<comment type="similarity">
    <text evidence="1">Belongs to the transposase IS1111A/IS1328/IS1533 family.</text>
</comment>
<dbReference type="EMBL" id="X16293">
    <property type="protein sequence ID" value="CAA34361.1"/>
    <property type="molecule type" value="Genomic_DNA"/>
</dbReference>
<dbReference type="PIR" id="S07630">
    <property type="entry name" value="S07630"/>
</dbReference>
<dbReference type="SMR" id="P14322"/>
<dbReference type="GO" id="GO:0003677">
    <property type="term" value="F:DNA binding"/>
    <property type="evidence" value="ECO:0007669"/>
    <property type="project" value="InterPro"/>
</dbReference>
<dbReference type="GO" id="GO:0004803">
    <property type="term" value="F:transposase activity"/>
    <property type="evidence" value="ECO:0007669"/>
    <property type="project" value="InterPro"/>
</dbReference>
<dbReference type="GO" id="GO:0006313">
    <property type="term" value="P:DNA transposition"/>
    <property type="evidence" value="ECO:0007669"/>
    <property type="project" value="InterPro"/>
</dbReference>
<dbReference type="InterPro" id="IPR002525">
    <property type="entry name" value="Transp_IS110-like_N"/>
</dbReference>
<dbReference type="InterPro" id="IPR047650">
    <property type="entry name" value="Transpos_IS110"/>
</dbReference>
<dbReference type="InterPro" id="IPR003346">
    <property type="entry name" value="Transposase_20"/>
</dbReference>
<dbReference type="NCBIfam" id="NF033542">
    <property type="entry name" value="transpos_IS110"/>
    <property type="match status" value="1"/>
</dbReference>
<dbReference type="PANTHER" id="PTHR33055:SF3">
    <property type="entry name" value="PUTATIVE TRANSPOSASE FOR IS117-RELATED"/>
    <property type="match status" value="1"/>
</dbReference>
<dbReference type="PANTHER" id="PTHR33055">
    <property type="entry name" value="TRANSPOSASE FOR INSERTION SEQUENCE ELEMENT IS1111A"/>
    <property type="match status" value="1"/>
</dbReference>
<dbReference type="Pfam" id="PF01548">
    <property type="entry name" value="DEDD_Tnp_IS110"/>
    <property type="match status" value="1"/>
</dbReference>
<dbReference type="Pfam" id="PF02371">
    <property type="entry name" value="Transposase_20"/>
    <property type="match status" value="1"/>
</dbReference>
<proteinExistence type="inferred from homology"/>
<name>YI90_MYCPC</name>
<sequence>MAQPVWAGVDAGKADHYCMVINDDAQRLLSQRVANDEAALLELIAAVTTLADGGEVTWAIDLNAGGAALLIALLIAAGQRLLYIPGRTVHHAAGSYRGEGKTDAKDAAIIADQARMRHDLQPLRAGDDIAVELRILTSRRSDLVADRTRAIEPNARPAAGILSALERAFDYNKSRAALILLTGYQTPDALRSAGGARVAAFLRKRKARNADTVAATALQAANAQHSIVPGQQLAATVVARLAKEVMALDTEIGDTDAMIEERFRRHRHAEIILSMPGFGVILGAEFLAATGGDMAAFASADRLAGVAGLAPVPRDSGRISGNLKRPRRYDRRLLRACYLSALVSIRTDPSSRTYYDRKRTEGKRHTQAVLALARRRLNVLWAMLRDHAVYHPATTTAAA</sequence>
<keyword id="KW-0814">Transposable element</keyword>
<accession>P14322</accession>
<reference key="1">
    <citation type="journal article" date="1989" name="Nucleic Acids Res.">
        <title>Sequence and characteristics of IS900, an insertion element identified in a human Crohn's disease isolate of Mycobacterium paratuberculosis.</title>
        <authorList>
            <person name="Green E.P."/>
            <person name="Tizard M.L.V."/>
            <person name="Moss M.T."/>
            <person name="Thompson J."/>
            <person name="Winterborne D.J."/>
            <person name="McFadden J.J."/>
            <person name="Herman-Taylor J."/>
        </authorList>
    </citation>
    <scope>NUCLEOTIDE SEQUENCE [GENOMIC DNA]</scope>
    <source>
        <strain>BEN</strain>
    </source>
</reference>
<protein>
    <recommendedName>
        <fullName>Insertion element IS900 uncharacterized 42 kDa protein</fullName>
    </recommendedName>
</protein>